<accession>A0A7H0DNF7</accession>
<keyword id="KW-1185">Reference proteome</keyword>
<comment type="induction">
    <text>Expressed in the late phase of the viral replicative cycle.</text>
</comment>
<comment type="similarity">
    <text evidence="1">Belongs to the orthopoxvirus OPG197 family.</text>
</comment>
<gene>
    <name type="primary">OPG197</name>
</gene>
<feature type="chain" id="PRO_0000457601" description="Protein OPG197">
    <location>
        <begin position="1"/>
        <end position="100"/>
    </location>
</feature>
<organismHost>
    <name type="scientific">Cynomys gunnisoni</name>
    <name type="common">Gunnison's prairie dog</name>
    <name type="synonym">Spermophilus gunnisoni</name>
    <dbReference type="NCBI Taxonomy" id="45479"/>
</organismHost>
<organismHost>
    <name type="scientific">Cynomys leucurus</name>
    <name type="common">White-tailed prairie dog</name>
    <dbReference type="NCBI Taxonomy" id="99825"/>
</organismHost>
<organismHost>
    <name type="scientific">Cynomys ludovicianus</name>
    <name type="common">Black-tailed prairie dog</name>
    <dbReference type="NCBI Taxonomy" id="45480"/>
</organismHost>
<organismHost>
    <name type="scientific">Cynomys mexicanus</name>
    <name type="common">Mexican prairie dog</name>
    <dbReference type="NCBI Taxonomy" id="99826"/>
</organismHost>
<organismHost>
    <name type="scientific">Cynomys parvidens</name>
    <name type="common">Utah prairie dog</name>
    <dbReference type="NCBI Taxonomy" id="99827"/>
</organismHost>
<organismHost>
    <name type="scientific">Gliridae</name>
    <name type="common">dormice</name>
    <dbReference type="NCBI Taxonomy" id="30650"/>
</organismHost>
<organismHost>
    <name type="scientific">Heliosciurus ruwenzorii</name>
    <name type="common">Ruwenzori sun squirrel</name>
    <dbReference type="NCBI Taxonomy" id="226685"/>
</organismHost>
<organismHost>
    <name type="scientific">Homo sapiens</name>
    <name type="common">Human</name>
    <dbReference type="NCBI Taxonomy" id="9606"/>
</organismHost>
<organismHost>
    <name type="scientific">Mus musculus</name>
    <name type="common">Mouse</name>
    <dbReference type="NCBI Taxonomy" id="10090"/>
</organismHost>
<dbReference type="EMBL" id="MT903340">
    <property type="protein sequence ID" value="QNP13040.1"/>
    <property type="molecule type" value="Genomic_DNA"/>
</dbReference>
<dbReference type="RefSeq" id="YP_010377167.1">
    <property type="nucleotide sequence ID" value="NC_063383.1"/>
</dbReference>
<dbReference type="SMR" id="A0A7H0DNF7"/>
<dbReference type="GeneID" id="72551581"/>
<dbReference type="Proteomes" id="UP000516359">
    <property type="component" value="Genome"/>
</dbReference>
<dbReference type="InterPro" id="IPR009754">
    <property type="entry name" value="Orthopox_B11R"/>
</dbReference>
<dbReference type="Pfam" id="PF07033">
    <property type="entry name" value="Orthopox_B11R"/>
    <property type="match status" value="1"/>
</dbReference>
<reference key="1">
    <citation type="journal article" date="2022" name="J. Infect. Dis.">
        <title>Exportation of Monkeypox virus from the African continent.</title>
        <authorList>
            <person name="Mauldin M.R."/>
            <person name="McCollum A.M."/>
            <person name="Nakazawa Y.J."/>
            <person name="Mandra A."/>
            <person name="Whitehouse E.R."/>
            <person name="Davidson W."/>
            <person name="Zhao H."/>
            <person name="Gao J."/>
            <person name="Li Y."/>
            <person name="Doty J."/>
            <person name="Yinka-Ogunleye A."/>
            <person name="Akinpelu A."/>
            <person name="Aruna O."/>
            <person name="Naidoo D."/>
            <person name="Lewandowski K."/>
            <person name="Afrough B."/>
            <person name="Graham V."/>
            <person name="Aarons E."/>
            <person name="Hewson R."/>
            <person name="Vipond R."/>
            <person name="Dunning J."/>
            <person name="Chand M."/>
            <person name="Brown C."/>
            <person name="Cohen-Gihon I."/>
            <person name="Erez N."/>
            <person name="Shifman O."/>
            <person name="Israeli O."/>
            <person name="Sharon M."/>
            <person name="Schwartz E."/>
            <person name="Beth-Din A."/>
            <person name="Zvi A."/>
            <person name="Mak T.M."/>
            <person name="Ng Y.K."/>
            <person name="Cui L."/>
            <person name="Lin R.T.P."/>
            <person name="Olson V.A."/>
            <person name="Brooks T."/>
            <person name="Paran N."/>
            <person name="Ihekweazu C."/>
            <person name="Reynolds M.G."/>
        </authorList>
    </citation>
    <scope>NUCLEOTIDE SEQUENCE [LARGE SCALE GENOMIC DNA]</scope>
    <source>
        <strain>MPXV-M5312_HM12_Rivers</strain>
    </source>
</reference>
<name>PG197_MONPV</name>
<organism>
    <name type="scientific">Monkeypox virus</name>
    <dbReference type="NCBI Taxonomy" id="10244"/>
    <lineage>
        <taxon>Viruses</taxon>
        <taxon>Varidnaviria</taxon>
        <taxon>Bamfordvirae</taxon>
        <taxon>Nucleocytoviricota</taxon>
        <taxon>Pokkesviricetes</taxon>
        <taxon>Chitovirales</taxon>
        <taxon>Poxviridae</taxon>
        <taxon>Chordopoxvirinae</taxon>
        <taxon>Orthopoxvirus</taxon>
    </lineage>
</organism>
<evidence type="ECO:0000305" key="1"/>
<sequence>MYSGIYPIVLLLTTNMDSDTDTDTDTDTDTDTDTDVEDIMNEIDREKEEILKNVEIENNKNINKNHPSEYIREALVINTSSNSDSIDKEVIEYISHDVGI</sequence>
<proteinExistence type="evidence at transcript level"/>
<protein>
    <recommendedName>
        <fullName>Protein OPG197</fullName>
    </recommendedName>
</protein>